<proteinExistence type="inferred from homology"/>
<protein>
    <recommendedName>
        <fullName evidence="1">Alanine--tRNA ligase</fullName>
        <ecNumber evidence="1">6.1.1.7</ecNumber>
    </recommendedName>
    <alternativeName>
        <fullName evidence="1">Alanyl-tRNA synthetase</fullName>
        <shortName evidence="1">AlaRS</shortName>
    </alternativeName>
</protein>
<keyword id="KW-0030">Aminoacyl-tRNA synthetase</keyword>
<keyword id="KW-0067">ATP-binding</keyword>
<keyword id="KW-0963">Cytoplasm</keyword>
<keyword id="KW-0436">Ligase</keyword>
<keyword id="KW-0479">Metal-binding</keyword>
<keyword id="KW-0547">Nucleotide-binding</keyword>
<keyword id="KW-0648">Protein biosynthesis</keyword>
<keyword id="KW-1185">Reference proteome</keyword>
<keyword id="KW-0694">RNA-binding</keyword>
<keyword id="KW-0820">tRNA-binding</keyword>
<keyword id="KW-0862">Zinc</keyword>
<sequence length="892" mass="102428">MKKLTTNEIRKMWLDFFKEKNHHFLEPVSLIPVEDPSLLWINSGVATLKPYFDGRKTPPSPRLTNSQKAIRTNDIENVGVTARHHTMFEMLGNFSIGDYFKKEAISFAWELLTSDKWFAIPVEKLYITVFNEDIEAYEYWINDIGIKQDHIFRLTRDTNFWDVGQGPCGPNTEIFFDRGEKWDKENIGPRLLAEDIENDRYIEIWNIVFSQFNNDGFNNYSELPRKNIDTGAGLERIASIFQDTPTNFETDIFWPTIKQIENICDANFKYSIENYFDEKAEQTKINTAFKVIADHVRATSFAIADGVFPGNKDRGYIIRRLIRRALMKGMELGINGPFLSTLVINVIDVMKDFYPYLLEKQNLIETTILIEEEKFLKTLSKGYEALNKMIENDKKVTGKNALLLFESYGYPIEQTIEIAEDRKVKVEIEEFNSLLEQAKEQARNARKDLKAWDKQNEIFTKINVESEFTGWEETSHKNAKIVYIFTDDEILTEATDKEVYVILDKTPFYAEKGGQAADKGYLVNKEARCEVIDTQQGPNHQHIHKILLDGSIKIGDQIDAFVDETKRTLTMKNHSGTHLIHSALRVVLGETVMQSGSYNDEHGLRMDFTYNDSIKAEELIAAEKLVLDKINEKINREVYFCSMKDAVSKYGALAFFTEKYDDIVRVVKFGDFSSELCGGTHVDNTIDIEDFMITGLESKGSGVYRVKCLTSKKAINEYLNTEFNKLLKLIQEQNSKYENTKLIQADQNIENIVKESVTKTISKESIQELKLILEKLSAALKIYERKIEDLLTSKKLEQFKAFEPITNDKGVGTIEQQVNGLNIKDMKNLVDEYKNKFEKLIIILTSETEEGNFVVVGVSEKIQNEYSAIEIFKNLTISPKGGGNSSLAQGKF</sequence>
<reference key="1">
    <citation type="submission" date="2004-06" db="EMBL/GenBank/DDBJ databases">
        <authorList>
            <person name="Birren B.W."/>
            <person name="Stange-Thomann N."/>
            <person name="Hafez N."/>
            <person name="DeCaprio D."/>
            <person name="Fisher S."/>
            <person name="Butler J."/>
            <person name="Elkins T."/>
            <person name="Kodira C.D."/>
            <person name="Major J."/>
            <person name="Wang S."/>
            <person name="Nicol R."/>
            <person name="Nusbaum C."/>
        </authorList>
    </citation>
    <scope>NUCLEOTIDE SEQUENCE [LARGE SCALE GENOMIC DNA]</scope>
    <source>
        <strain>ATCC 33453 / NBRC 100688 / NCTC 11704 / L1</strain>
    </source>
</reference>
<feature type="chain" id="PRO_0000075142" description="Alanine--tRNA ligase">
    <location>
        <begin position="1"/>
        <end position="892"/>
    </location>
</feature>
<feature type="binding site" evidence="1">
    <location>
        <position position="574"/>
    </location>
    <ligand>
        <name>Zn(2+)</name>
        <dbReference type="ChEBI" id="CHEBI:29105"/>
    </ligand>
</feature>
<feature type="binding site" evidence="1">
    <location>
        <position position="578"/>
    </location>
    <ligand>
        <name>Zn(2+)</name>
        <dbReference type="ChEBI" id="CHEBI:29105"/>
    </ligand>
</feature>
<feature type="binding site" evidence="1">
    <location>
        <position position="677"/>
    </location>
    <ligand>
        <name>Zn(2+)</name>
        <dbReference type="ChEBI" id="CHEBI:29105"/>
    </ligand>
</feature>
<feature type="binding site" evidence="1">
    <location>
        <position position="681"/>
    </location>
    <ligand>
        <name>Zn(2+)</name>
        <dbReference type="ChEBI" id="CHEBI:29105"/>
    </ligand>
</feature>
<organism>
    <name type="scientific">Mesoplasma florum (strain ATCC 33453 / NBRC 100688 / NCTC 11704 / L1)</name>
    <name type="common">Acholeplasma florum</name>
    <dbReference type="NCBI Taxonomy" id="265311"/>
    <lineage>
        <taxon>Bacteria</taxon>
        <taxon>Bacillati</taxon>
        <taxon>Mycoplasmatota</taxon>
        <taxon>Mollicutes</taxon>
        <taxon>Entomoplasmatales</taxon>
        <taxon>Entomoplasmataceae</taxon>
        <taxon>Mesoplasma</taxon>
    </lineage>
</organism>
<gene>
    <name evidence="1" type="primary">alaS</name>
    <name type="ordered locus">Mfl613</name>
</gene>
<accession>Q6F0K3</accession>
<dbReference type="EC" id="6.1.1.7" evidence="1"/>
<dbReference type="EMBL" id="AE017263">
    <property type="protein sequence ID" value="AAT75970.1"/>
    <property type="molecule type" value="Genomic_DNA"/>
</dbReference>
<dbReference type="RefSeq" id="WP_011183510.1">
    <property type="nucleotide sequence ID" value="NC_006055.1"/>
</dbReference>
<dbReference type="RefSeq" id="YP_053854.1">
    <property type="nucleotide sequence ID" value="NC_006055.1"/>
</dbReference>
<dbReference type="SMR" id="Q6F0K3"/>
<dbReference type="STRING" id="265311.Mfl613"/>
<dbReference type="PaxDb" id="265311-Mfl613"/>
<dbReference type="EnsemblBacteria" id="AAT75970">
    <property type="protein sequence ID" value="AAT75970"/>
    <property type="gene ID" value="Mfl613"/>
</dbReference>
<dbReference type="GeneID" id="2897806"/>
<dbReference type="KEGG" id="mfl:Mfl613"/>
<dbReference type="PATRIC" id="fig|265311.5.peg.616"/>
<dbReference type="eggNOG" id="COG0013">
    <property type="taxonomic scope" value="Bacteria"/>
</dbReference>
<dbReference type="HOGENOM" id="CLU_004485_1_1_14"/>
<dbReference type="OrthoDB" id="9803884at2"/>
<dbReference type="Proteomes" id="UP000006647">
    <property type="component" value="Chromosome"/>
</dbReference>
<dbReference type="GO" id="GO:0005829">
    <property type="term" value="C:cytosol"/>
    <property type="evidence" value="ECO:0007669"/>
    <property type="project" value="TreeGrafter"/>
</dbReference>
<dbReference type="GO" id="GO:0004813">
    <property type="term" value="F:alanine-tRNA ligase activity"/>
    <property type="evidence" value="ECO:0007669"/>
    <property type="project" value="UniProtKB-UniRule"/>
</dbReference>
<dbReference type="GO" id="GO:0002161">
    <property type="term" value="F:aminoacyl-tRNA deacylase activity"/>
    <property type="evidence" value="ECO:0007669"/>
    <property type="project" value="TreeGrafter"/>
</dbReference>
<dbReference type="GO" id="GO:0005524">
    <property type="term" value="F:ATP binding"/>
    <property type="evidence" value="ECO:0007669"/>
    <property type="project" value="UniProtKB-UniRule"/>
</dbReference>
<dbReference type="GO" id="GO:0000049">
    <property type="term" value="F:tRNA binding"/>
    <property type="evidence" value="ECO:0007669"/>
    <property type="project" value="UniProtKB-KW"/>
</dbReference>
<dbReference type="GO" id="GO:0008270">
    <property type="term" value="F:zinc ion binding"/>
    <property type="evidence" value="ECO:0007669"/>
    <property type="project" value="UniProtKB-UniRule"/>
</dbReference>
<dbReference type="GO" id="GO:0006419">
    <property type="term" value="P:alanyl-tRNA aminoacylation"/>
    <property type="evidence" value="ECO:0007669"/>
    <property type="project" value="UniProtKB-UniRule"/>
</dbReference>
<dbReference type="CDD" id="cd00673">
    <property type="entry name" value="AlaRS_core"/>
    <property type="match status" value="1"/>
</dbReference>
<dbReference type="FunFam" id="3.30.930.10:FF:000046">
    <property type="entry name" value="Alanine--tRNA ligase"/>
    <property type="match status" value="1"/>
</dbReference>
<dbReference type="FunFam" id="3.30.980.10:FF:000004">
    <property type="entry name" value="Alanine--tRNA ligase, cytoplasmic"/>
    <property type="match status" value="1"/>
</dbReference>
<dbReference type="Gene3D" id="2.40.30.130">
    <property type="match status" value="1"/>
</dbReference>
<dbReference type="Gene3D" id="3.10.310.40">
    <property type="match status" value="1"/>
</dbReference>
<dbReference type="Gene3D" id="3.30.54.20">
    <property type="match status" value="1"/>
</dbReference>
<dbReference type="Gene3D" id="3.30.930.10">
    <property type="entry name" value="Bira Bifunctional Protein, Domain 2"/>
    <property type="match status" value="1"/>
</dbReference>
<dbReference type="Gene3D" id="3.30.980.10">
    <property type="entry name" value="Threonyl-trna Synthetase, Chain A, domain 2"/>
    <property type="match status" value="1"/>
</dbReference>
<dbReference type="HAMAP" id="MF_00036_B">
    <property type="entry name" value="Ala_tRNA_synth_B"/>
    <property type="match status" value="1"/>
</dbReference>
<dbReference type="InterPro" id="IPR045864">
    <property type="entry name" value="aa-tRNA-synth_II/BPL/LPL"/>
</dbReference>
<dbReference type="InterPro" id="IPR002318">
    <property type="entry name" value="Ala-tRNA-lgiase_IIc"/>
</dbReference>
<dbReference type="InterPro" id="IPR018162">
    <property type="entry name" value="Ala-tRNA-ligase_IIc_anticod-bd"/>
</dbReference>
<dbReference type="InterPro" id="IPR018165">
    <property type="entry name" value="Ala-tRNA-synth_IIc_core"/>
</dbReference>
<dbReference type="InterPro" id="IPR018164">
    <property type="entry name" value="Ala-tRNA-synth_IIc_N"/>
</dbReference>
<dbReference type="InterPro" id="IPR050058">
    <property type="entry name" value="Ala-tRNA_ligase"/>
</dbReference>
<dbReference type="InterPro" id="IPR023033">
    <property type="entry name" value="Ala_tRNA_ligase_euk/bac"/>
</dbReference>
<dbReference type="InterPro" id="IPR018163">
    <property type="entry name" value="Thr/Ala-tRNA-synth_IIc_edit"/>
</dbReference>
<dbReference type="InterPro" id="IPR009000">
    <property type="entry name" value="Transl_B-barrel_sf"/>
</dbReference>
<dbReference type="InterPro" id="IPR012947">
    <property type="entry name" value="tRNA_SAD"/>
</dbReference>
<dbReference type="NCBIfam" id="TIGR00344">
    <property type="entry name" value="alaS"/>
    <property type="match status" value="1"/>
</dbReference>
<dbReference type="PANTHER" id="PTHR11777:SF9">
    <property type="entry name" value="ALANINE--TRNA LIGASE, CYTOPLASMIC"/>
    <property type="match status" value="1"/>
</dbReference>
<dbReference type="PANTHER" id="PTHR11777">
    <property type="entry name" value="ALANYL-TRNA SYNTHETASE"/>
    <property type="match status" value="1"/>
</dbReference>
<dbReference type="Pfam" id="PF01411">
    <property type="entry name" value="tRNA-synt_2c"/>
    <property type="match status" value="1"/>
</dbReference>
<dbReference type="Pfam" id="PF07973">
    <property type="entry name" value="tRNA_SAD"/>
    <property type="match status" value="1"/>
</dbReference>
<dbReference type="PRINTS" id="PR00980">
    <property type="entry name" value="TRNASYNTHALA"/>
</dbReference>
<dbReference type="SMART" id="SM00863">
    <property type="entry name" value="tRNA_SAD"/>
    <property type="match status" value="1"/>
</dbReference>
<dbReference type="SUPFAM" id="SSF55681">
    <property type="entry name" value="Class II aaRS and biotin synthetases"/>
    <property type="match status" value="1"/>
</dbReference>
<dbReference type="SUPFAM" id="SSF101353">
    <property type="entry name" value="Putative anticodon-binding domain of alanyl-tRNA synthetase (AlaRS)"/>
    <property type="match status" value="1"/>
</dbReference>
<dbReference type="SUPFAM" id="SSF55186">
    <property type="entry name" value="ThrRS/AlaRS common domain"/>
    <property type="match status" value="1"/>
</dbReference>
<dbReference type="SUPFAM" id="SSF50447">
    <property type="entry name" value="Translation proteins"/>
    <property type="match status" value="1"/>
</dbReference>
<dbReference type="PROSITE" id="PS50860">
    <property type="entry name" value="AA_TRNA_LIGASE_II_ALA"/>
    <property type="match status" value="1"/>
</dbReference>
<evidence type="ECO:0000255" key="1">
    <source>
        <dbReference type="HAMAP-Rule" id="MF_00036"/>
    </source>
</evidence>
<comment type="function">
    <text evidence="1">Catalyzes the attachment of alanine to tRNA(Ala) in a two-step reaction: alanine is first activated by ATP to form Ala-AMP and then transferred to the acceptor end of tRNA(Ala). Also edits incorrectly charged Ser-tRNA(Ala) and Gly-tRNA(Ala) via its editing domain.</text>
</comment>
<comment type="catalytic activity">
    <reaction evidence="1">
        <text>tRNA(Ala) + L-alanine + ATP = L-alanyl-tRNA(Ala) + AMP + diphosphate</text>
        <dbReference type="Rhea" id="RHEA:12540"/>
        <dbReference type="Rhea" id="RHEA-COMP:9657"/>
        <dbReference type="Rhea" id="RHEA-COMP:9923"/>
        <dbReference type="ChEBI" id="CHEBI:30616"/>
        <dbReference type="ChEBI" id="CHEBI:33019"/>
        <dbReference type="ChEBI" id="CHEBI:57972"/>
        <dbReference type="ChEBI" id="CHEBI:78442"/>
        <dbReference type="ChEBI" id="CHEBI:78497"/>
        <dbReference type="ChEBI" id="CHEBI:456215"/>
        <dbReference type="EC" id="6.1.1.7"/>
    </reaction>
</comment>
<comment type="cofactor">
    <cofactor evidence="1">
        <name>Zn(2+)</name>
        <dbReference type="ChEBI" id="CHEBI:29105"/>
    </cofactor>
    <text evidence="1">Binds 1 zinc ion per subunit.</text>
</comment>
<comment type="subcellular location">
    <subcellularLocation>
        <location evidence="1">Cytoplasm</location>
    </subcellularLocation>
</comment>
<comment type="domain">
    <text evidence="1">Consists of three domains; the N-terminal catalytic domain, the editing domain and the C-terminal C-Ala domain. The editing domain removes incorrectly charged amino acids, while the C-Ala domain, along with tRNA(Ala), serves as a bridge to cooperatively bring together the editing and aminoacylation centers thus stimulating deacylation of misacylated tRNAs.</text>
</comment>
<comment type="similarity">
    <text evidence="1">Belongs to the class-II aminoacyl-tRNA synthetase family.</text>
</comment>
<name>SYA_MESFL</name>